<sequence length="126" mass="13865">MSDPRYQIDVSVVTRYLKDQSDPENDRFAFAYTITVQNNGTVKAKLMSRHWLITNGDGEVEEVRGAGVIGQQPLIEPGQSHTYSSGAVISTRVGTMQGSYQMFAEDGKRFDATIAPFRLAVPGALH</sequence>
<evidence type="ECO:0000255" key="1">
    <source>
        <dbReference type="HAMAP-Rule" id="MF_00791"/>
    </source>
</evidence>
<reference key="1">
    <citation type="journal article" date="2006" name="Nat. Biotechnol.">
        <title>Complete genome sequence of the entomopathogenic and metabolically versatile soil bacterium Pseudomonas entomophila.</title>
        <authorList>
            <person name="Vodovar N."/>
            <person name="Vallenet D."/>
            <person name="Cruveiller S."/>
            <person name="Rouy Z."/>
            <person name="Barbe V."/>
            <person name="Acosta C."/>
            <person name="Cattolico L."/>
            <person name="Jubin C."/>
            <person name="Lajus A."/>
            <person name="Segurens B."/>
            <person name="Vacherie B."/>
            <person name="Wincker P."/>
            <person name="Weissenbach J."/>
            <person name="Lemaitre B."/>
            <person name="Medigue C."/>
            <person name="Boccard F."/>
        </authorList>
    </citation>
    <scope>NUCLEOTIDE SEQUENCE [LARGE SCALE GENOMIC DNA]</scope>
    <source>
        <strain>L48</strain>
    </source>
</reference>
<organism>
    <name type="scientific">Pseudomonas entomophila (strain L48)</name>
    <dbReference type="NCBI Taxonomy" id="384676"/>
    <lineage>
        <taxon>Bacteria</taxon>
        <taxon>Pseudomonadati</taxon>
        <taxon>Pseudomonadota</taxon>
        <taxon>Gammaproteobacteria</taxon>
        <taxon>Pseudomonadales</taxon>
        <taxon>Pseudomonadaceae</taxon>
        <taxon>Pseudomonas</taxon>
    </lineage>
</organism>
<gene>
    <name evidence="1" type="primary">apaG</name>
    <name type="ordered locus">PSEEN0427</name>
</gene>
<dbReference type="EMBL" id="CT573326">
    <property type="protein sequence ID" value="CAK13381.1"/>
    <property type="molecule type" value="Genomic_DNA"/>
</dbReference>
<dbReference type="RefSeq" id="WP_011531838.1">
    <property type="nucleotide sequence ID" value="NC_008027.1"/>
</dbReference>
<dbReference type="SMR" id="Q1IG21"/>
<dbReference type="STRING" id="384676.PSEEN0427"/>
<dbReference type="GeneID" id="32803762"/>
<dbReference type="KEGG" id="pen:PSEEN0427"/>
<dbReference type="eggNOG" id="COG2967">
    <property type="taxonomic scope" value="Bacteria"/>
</dbReference>
<dbReference type="HOGENOM" id="CLU_128074_0_0_6"/>
<dbReference type="OrthoDB" id="9795226at2"/>
<dbReference type="Proteomes" id="UP000000658">
    <property type="component" value="Chromosome"/>
</dbReference>
<dbReference type="GO" id="GO:0070987">
    <property type="term" value="P:error-free translesion synthesis"/>
    <property type="evidence" value="ECO:0007669"/>
    <property type="project" value="TreeGrafter"/>
</dbReference>
<dbReference type="Gene3D" id="2.60.40.1470">
    <property type="entry name" value="ApaG domain"/>
    <property type="match status" value="1"/>
</dbReference>
<dbReference type="HAMAP" id="MF_00791">
    <property type="entry name" value="ApaG"/>
    <property type="match status" value="1"/>
</dbReference>
<dbReference type="InterPro" id="IPR007474">
    <property type="entry name" value="ApaG_domain"/>
</dbReference>
<dbReference type="InterPro" id="IPR036767">
    <property type="entry name" value="ApaG_sf"/>
</dbReference>
<dbReference type="InterPro" id="IPR023065">
    <property type="entry name" value="Uncharacterised_ApaG"/>
</dbReference>
<dbReference type="NCBIfam" id="NF003967">
    <property type="entry name" value="PRK05461.1"/>
    <property type="match status" value="1"/>
</dbReference>
<dbReference type="PANTHER" id="PTHR14289">
    <property type="entry name" value="F-BOX ONLY PROTEIN 3"/>
    <property type="match status" value="1"/>
</dbReference>
<dbReference type="PANTHER" id="PTHR14289:SF16">
    <property type="entry name" value="POLYMERASE DELTA-INTERACTING PROTEIN 2"/>
    <property type="match status" value="1"/>
</dbReference>
<dbReference type="Pfam" id="PF04379">
    <property type="entry name" value="DUF525"/>
    <property type="match status" value="1"/>
</dbReference>
<dbReference type="SUPFAM" id="SSF110069">
    <property type="entry name" value="ApaG-like"/>
    <property type="match status" value="1"/>
</dbReference>
<dbReference type="PROSITE" id="PS51087">
    <property type="entry name" value="APAG"/>
    <property type="match status" value="1"/>
</dbReference>
<proteinExistence type="inferred from homology"/>
<accession>Q1IG21</accession>
<protein>
    <recommendedName>
        <fullName evidence="1">Protein ApaG</fullName>
    </recommendedName>
</protein>
<feature type="chain" id="PRO_1000083633" description="Protein ApaG">
    <location>
        <begin position="1"/>
        <end position="126"/>
    </location>
</feature>
<feature type="domain" description="ApaG" evidence="1">
    <location>
        <begin position="2"/>
        <end position="126"/>
    </location>
</feature>
<name>APAG_PSEE4</name>